<dbReference type="EC" id="2.1.2.11" evidence="1"/>
<dbReference type="EMBL" id="CP000308">
    <property type="protein sequence ID" value="ABG14864.1"/>
    <property type="molecule type" value="Genomic_DNA"/>
</dbReference>
<dbReference type="RefSeq" id="WP_002209349.1">
    <property type="nucleotide sequence ID" value="NZ_CP009906.1"/>
</dbReference>
<dbReference type="SMR" id="Q1C3V8"/>
<dbReference type="GeneID" id="57975308"/>
<dbReference type="KEGG" id="ypa:YPA_2902"/>
<dbReference type="UniPathway" id="UPA00028">
    <property type="reaction ID" value="UER00003"/>
</dbReference>
<dbReference type="Proteomes" id="UP000001971">
    <property type="component" value="Chromosome"/>
</dbReference>
<dbReference type="GO" id="GO:0005737">
    <property type="term" value="C:cytoplasm"/>
    <property type="evidence" value="ECO:0007669"/>
    <property type="project" value="UniProtKB-SubCell"/>
</dbReference>
<dbReference type="GO" id="GO:0003864">
    <property type="term" value="F:3-methyl-2-oxobutanoate hydroxymethyltransferase activity"/>
    <property type="evidence" value="ECO:0007669"/>
    <property type="project" value="UniProtKB-UniRule"/>
</dbReference>
<dbReference type="GO" id="GO:0000287">
    <property type="term" value="F:magnesium ion binding"/>
    <property type="evidence" value="ECO:0007669"/>
    <property type="project" value="TreeGrafter"/>
</dbReference>
<dbReference type="GO" id="GO:0015940">
    <property type="term" value="P:pantothenate biosynthetic process"/>
    <property type="evidence" value="ECO:0007669"/>
    <property type="project" value="UniProtKB-UniRule"/>
</dbReference>
<dbReference type="CDD" id="cd06557">
    <property type="entry name" value="KPHMT-like"/>
    <property type="match status" value="1"/>
</dbReference>
<dbReference type="FunFam" id="3.20.20.60:FF:000003">
    <property type="entry name" value="3-methyl-2-oxobutanoate hydroxymethyltransferase"/>
    <property type="match status" value="1"/>
</dbReference>
<dbReference type="Gene3D" id="3.20.20.60">
    <property type="entry name" value="Phosphoenolpyruvate-binding domains"/>
    <property type="match status" value="1"/>
</dbReference>
<dbReference type="HAMAP" id="MF_00156">
    <property type="entry name" value="PanB"/>
    <property type="match status" value="1"/>
</dbReference>
<dbReference type="InterPro" id="IPR003700">
    <property type="entry name" value="Pantoate_hydroxy_MeTrfase"/>
</dbReference>
<dbReference type="InterPro" id="IPR015813">
    <property type="entry name" value="Pyrv/PenolPyrv_kinase-like_dom"/>
</dbReference>
<dbReference type="InterPro" id="IPR040442">
    <property type="entry name" value="Pyrv_kinase-like_dom_sf"/>
</dbReference>
<dbReference type="NCBIfam" id="TIGR00222">
    <property type="entry name" value="panB"/>
    <property type="match status" value="1"/>
</dbReference>
<dbReference type="NCBIfam" id="NF001452">
    <property type="entry name" value="PRK00311.1"/>
    <property type="match status" value="1"/>
</dbReference>
<dbReference type="PANTHER" id="PTHR20881">
    <property type="entry name" value="3-METHYL-2-OXOBUTANOATE HYDROXYMETHYLTRANSFERASE"/>
    <property type="match status" value="1"/>
</dbReference>
<dbReference type="PANTHER" id="PTHR20881:SF0">
    <property type="entry name" value="3-METHYL-2-OXOBUTANOATE HYDROXYMETHYLTRANSFERASE"/>
    <property type="match status" value="1"/>
</dbReference>
<dbReference type="Pfam" id="PF02548">
    <property type="entry name" value="Pantoate_transf"/>
    <property type="match status" value="1"/>
</dbReference>
<dbReference type="PIRSF" id="PIRSF000388">
    <property type="entry name" value="Pantoate_hydroxy_MeTrfase"/>
    <property type="match status" value="1"/>
</dbReference>
<dbReference type="SUPFAM" id="SSF51621">
    <property type="entry name" value="Phosphoenolpyruvate/pyruvate domain"/>
    <property type="match status" value="1"/>
</dbReference>
<organism>
    <name type="scientific">Yersinia pestis bv. Antiqua (strain Antiqua)</name>
    <dbReference type="NCBI Taxonomy" id="360102"/>
    <lineage>
        <taxon>Bacteria</taxon>
        <taxon>Pseudomonadati</taxon>
        <taxon>Pseudomonadota</taxon>
        <taxon>Gammaproteobacteria</taxon>
        <taxon>Enterobacterales</taxon>
        <taxon>Yersiniaceae</taxon>
        <taxon>Yersinia</taxon>
    </lineage>
</organism>
<name>PANB_YERPA</name>
<proteinExistence type="inferred from homology"/>
<feature type="chain" id="PRO_0000297415" description="3-methyl-2-oxobutanoate hydroxymethyltransferase">
    <location>
        <begin position="1"/>
        <end position="265"/>
    </location>
</feature>
<feature type="active site" description="Proton acceptor" evidence="1">
    <location>
        <position position="181"/>
    </location>
</feature>
<feature type="binding site" evidence="1">
    <location>
        <begin position="45"/>
        <end position="46"/>
    </location>
    <ligand>
        <name>3-methyl-2-oxobutanoate</name>
        <dbReference type="ChEBI" id="CHEBI:11851"/>
    </ligand>
</feature>
<feature type="binding site" evidence="1">
    <location>
        <position position="45"/>
    </location>
    <ligand>
        <name>Mg(2+)</name>
        <dbReference type="ChEBI" id="CHEBI:18420"/>
    </ligand>
</feature>
<feature type="binding site" evidence="1">
    <location>
        <position position="84"/>
    </location>
    <ligand>
        <name>3-methyl-2-oxobutanoate</name>
        <dbReference type="ChEBI" id="CHEBI:11851"/>
    </ligand>
</feature>
<feature type="binding site" evidence="1">
    <location>
        <position position="84"/>
    </location>
    <ligand>
        <name>Mg(2+)</name>
        <dbReference type="ChEBI" id="CHEBI:18420"/>
    </ligand>
</feature>
<feature type="binding site" evidence="1">
    <location>
        <position position="112"/>
    </location>
    <ligand>
        <name>3-methyl-2-oxobutanoate</name>
        <dbReference type="ChEBI" id="CHEBI:11851"/>
    </ligand>
</feature>
<feature type="binding site" evidence="1">
    <location>
        <position position="114"/>
    </location>
    <ligand>
        <name>Mg(2+)</name>
        <dbReference type="ChEBI" id="CHEBI:18420"/>
    </ligand>
</feature>
<reference key="1">
    <citation type="journal article" date="2006" name="J. Bacteriol.">
        <title>Complete genome sequence of Yersinia pestis strains Antiqua and Nepal516: evidence of gene reduction in an emerging pathogen.</title>
        <authorList>
            <person name="Chain P.S.G."/>
            <person name="Hu P."/>
            <person name="Malfatti S.A."/>
            <person name="Radnedge L."/>
            <person name="Larimer F."/>
            <person name="Vergez L.M."/>
            <person name="Worsham P."/>
            <person name="Chu M.C."/>
            <person name="Andersen G.L."/>
        </authorList>
    </citation>
    <scope>NUCLEOTIDE SEQUENCE [LARGE SCALE GENOMIC DNA]</scope>
    <source>
        <strain>Antiqua</strain>
    </source>
</reference>
<evidence type="ECO:0000255" key="1">
    <source>
        <dbReference type="HAMAP-Rule" id="MF_00156"/>
    </source>
</evidence>
<gene>
    <name evidence="1" type="primary">panB</name>
    <name type="ordered locus">YPA_2902</name>
</gene>
<keyword id="KW-0963">Cytoplasm</keyword>
<keyword id="KW-0460">Magnesium</keyword>
<keyword id="KW-0479">Metal-binding</keyword>
<keyword id="KW-0566">Pantothenate biosynthesis</keyword>
<keyword id="KW-0808">Transferase</keyword>
<comment type="function">
    <text evidence="1">Catalyzes the reversible reaction in which hydroxymethyl group from 5,10-methylenetetrahydrofolate is transferred onto alpha-ketoisovalerate to form ketopantoate.</text>
</comment>
<comment type="catalytic activity">
    <reaction evidence="1">
        <text>3-methyl-2-oxobutanoate + (6R)-5,10-methylene-5,6,7,8-tetrahydrofolate + H2O = 2-dehydropantoate + (6S)-5,6,7,8-tetrahydrofolate</text>
        <dbReference type="Rhea" id="RHEA:11824"/>
        <dbReference type="ChEBI" id="CHEBI:11561"/>
        <dbReference type="ChEBI" id="CHEBI:11851"/>
        <dbReference type="ChEBI" id="CHEBI:15377"/>
        <dbReference type="ChEBI" id="CHEBI:15636"/>
        <dbReference type="ChEBI" id="CHEBI:57453"/>
        <dbReference type="EC" id="2.1.2.11"/>
    </reaction>
</comment>
<comment type="cofactor">
    <cofactor evidence="1">
        <name>Mg(2+)</name>
        <dbReference type="ChEBI" id="CHEBI:18420"/>
    </cofactor>
    <text evidence="1">Binds 1 Mg(2+) ion per subunit.</text>
</comment>
<comment type="pathway">
    <text evidence="1">Cofactor biosynthesis; (R)-pantothenate biosynthesis; (R)-pantoate from 3-methyl-2-oxobutanoate: step 1/2.</text>
</comment>
<comment type="subunit">
    <text evidence="1">Homodecamer; pentamer of dimers.</text>
</comment>
<comment type="subcellular location">
    <subcellularLocation>
        <location evidence="1">Cytoplasm</location>
    </subcellularLocation>
</comment>
<comment type="similarity">
    <text evidence="1">Belongs to the PanB family.</text>
</comment>
<accession>Q1C3V8</accession>
<protein>
    <recommendedName>
        <fullName evidence="1">3-methyl-2-oxobutanoate hydroxymethyltransferase</fullName>
        <ecNumber evidence="1">2.1.2.11</ecNumber>
    </recommendedName>
    <alternativeName>
        <fullName evidence="1">Ketopantoate hydroxymethyltransferase</fullName>
        <shortName evidence="1">KPHMT</shortName>
    </alternativeName>
</protein>
<sequence>MKTTTMSQLRQWKQEKRKFATLTAYDASFAQLFAEQGIQVLLVGDSLGMTLQGFDSTLPVTVADMAYHTRAVRRGAPHCLLLADMPFMSYATPELAFTHAAELMRAGANMVKLEGGSWLCDTIRMLAERAVPVCGHLGLTPQSVNIFGGYKVQGREEVAANQLLQDAIALEQAGAQLLVLECVPVELAQRVTEELTIPVIGIGAGNVTDGQILVMHDALGITGGHTPKFSKNFLAHSAGDIRAAIKLYIEEVEGGIYPAEEHTFQ</sequence>